<accession>P48050</accession>
<accession>Q14D44</accession>
<reference key="1">
    <citation type="journal article" date="1994" name="Proc. Natl. Acad. Sci. U.S.A.">
        <title>Primary structure and characterization of a small-conductance inwardly rectifying potassium channel from human hippocampus.</title>
        <authorList>
            <person name="Perier F."/>
            <person name="Radeke C.M."/>
            <person name="Vandenberg C.A."/>
        </authorList>
    </citation>
    <scope>NUCLEOTIDE SEQUENCE [MRNA]</scope>
    <scope>FUNCTION</scope>
    <scope>TRANSPORTER ACTIVITY</scope>
    <source>
        <tissue>Hippocampus</tissue>
    </source>
</reference>
<reference key="2">
    <citation type="journal article" date="1994" name="FEBS Lett.">
        <title>Cloning a novel human brain inward rectifier potassium channel and its functional expression in Xenopus oocytes.</title>
        <authorList>
            <person name="Tang W."/>
            <person name="Yang X.-C."/>
        </authorList>
    </citation>
    <scope>NUCLEOTIDE SEQUENCE [MRNA]</scope>
    <scope>FUNCTION</scope>
    <scope>TRANSPORTER ACTIVITY</scope>
    <source>
        <tissue>Brain</tissue>
    </source>
</reference>
<reference key="3">
    <citation type="journal article" date="1994" name="J. Biol. Chem.">
        <title>Cloning and expression of a novel human brain inward rectifier potassium channel.</title>
        <authorList>
            <person name="Makhina E.N."/>
            <person name="Kelly A.J."/>
            <person name="Lopatin A.N."/>
            <person name="Mercer R.W."/>
            <person name="Nichols C.G."/>
        </authorList>
    </citation>
    <scope>NUCLEOTIDE SEQUENCE [MRNA]</scope>
    <scope>FUNCTION</scope>
    <scope>TRANSPORTER ACTIVITY</scope>
    <source>
        <tissue>Hippocampus</tissue>
    </source>
</reference>
<reference key="4">
    <citation type="journal article" date="2004" name="Genome Biol.">
        <title>A genome annotation-driven approach to cloning the human ORFeome.</title>
        <authorList>
            <person name="Collins J.E."/>
            <person name="Wright C.L."/>
            <person name="Edwards C.A."/>
            <person name="Davis M.P."/>
            <person name="Grinham J.A."/>
            <person name="Cole C.G."/>
            <person name="Goward M.E."/>
            <person name="Aguado B."/>
            <person name="Mallya M."/>
            <person name="Mokrab Y."/>
            <person name="Huckle E.J."/>
            <person name="Beare D.M."/>
            <person name="Dunham I."/>
        </authorList>
    </citation>
    <scope>NUCLEOTIDE SEQUENCE [LARGE SCALE MRNA]</scope>
</reference>
<reference key="5">
    <citation type="journal article" date="1999" name="Nature">
        <title>The DNA sequence of human chromosome 22.</title>
        <authorList>
            <person name="Dunham I."/>
            <person name="Hunt A.R."/>
            <person name="Collins J.E."/>
            <person name="Bruskiewich R."/>
            <person name="Beare D.M."/>
            <person name="Clamp M."/>
            <person name="Smink L.J."/>
            <person name="Ainscough R."/>
            <person name="Almeida J.P."/>
            <person name="Babbage A.K."/>
            <person name="Bagguley C."/>
            <person name="Bailey J."/>
            <person name="Barlow K.F."/>
            <person name="Bates K.N."/>
            <person name="Beasley O.P."/>
            <person name="Bird C.P."/>
            <person name="Blakey S.E."/>
            <person name="Bridgeman A.M."/>
            <person name="Buck D."/>
            <person name="Burgess J."/>
            <person name="Burrill W.D."/>
            <person name="Burton J."/>
            <person name="Carder C."/>
            <person name="Carter N.P."/>
            <person name="Chen Y."/>
            <person name="Clark G."/>
            <person name="Clegg S.M."/>
            <person name="Cobley V.E."/>
            <person name="Cole C.G."/>
            <person name="Collier R.E."/>
            <person name="Connor R."/>
            <person name="Conroy D."/>
            <person name="Corby N.R."/>
            <person name="Coville G.J."/>
            <person name="Cox A.V."/>
            <person name="Davis J."/>
            <person name="Dawson E."/>
            <person name="Dhami P.D."/>
            <person name="Dockree C."/>
            <person name="Dodsworth S.J."/>
            <person name="Durbin R.M."/>
            <person name="Ellington A.G."/>
            <person name="Evans K.L."/>
            <person name="Fey J.M."/>
            <person name="Fleming K."/>
            <person name="French L."/>
            <person name="Garner A.A."/>
            <person name="Gilbert J.G.R."/>
            <person name="Goward M.E."/>
            <person name="Grafham D.V."/>
            <person name="Griffiths M.N.D."/>
            <person name="Hall C."/>
            <person name="Hall R.E."/>
            <person name="Hall-Tamlyn G."/>
            <person name="Heathcott R.W."/>
            <person name="Ho S."/>
            <person name="Holmes S."/>
            <person name="Hunt S.E."/>
            <person name="Jones M.C."/>
            <person name="Kershaw J."/>
            <person name="Kimberley A.M."/>
            <person name="King A."/>
            <person name="Laird G.K."/>
            <person name="Langford C.F."/>
            <person name="Leversha M.A."/>
            <person name="Lloyd C."/>
            <person name="Lloyd D.M."/>
            <person name="Martyn I.D."/>
            <person name="Mashreghi-Mohammadi M."/>
            <person name="Matthews L.H."/>
            <person name="Mccann O.T."/>
            <person name="Mcclay J."/>
            <person name="Mclaren S."/>
            <person name="McMurray A.A."/>
            <person name="Milne S.A."/>
            <person name="Mortimore B.J."/>
            <person name="Odell C.N."/>
            <person name="Pavitt R."/>
            <person name="Pearce A.V."/>
            <person name="Pearson D."/>
            <person name="Phillimore B.J.C.T."/>
            <person name="Phillips S.H."/>
            <person name="Plumb R.W."/>
            <person name="Ramsay H."/>
            <person name="Ramsey Y."/>
            <person name="Rogers L."/>
            <person name="Ross M.T."/>
            <person name="Scott C.E."/>
            <person name="Sehra H.K."/>
            <person name="Skuce C.D."/>
            <person name="Smalley S."/>
            <person name="Smith M.L."/>
            <person name="Soderlund C."/>
            <person name="Spragon L."/>
            <person name="Steward C.A."/>
            <person name="Sulston J.E."/>
            <person name="Swann R.M."/>
            <person name="Vaudin M."/>
            <person name="Wall M."/>
            <person name="Wallis J.M."/>
            <person name="Whiteley M.N."/>
            <person name="Willey D.L."/>
            <person name="Williams L."/>
            <person name="Williams S.A."/>
            <person name="Williamson H."/>
            <person name="Wilmer T.E."/>
            <person name="Wilming L."/>
            <person name="Wright C.L."/>
            <person name="Hubbard T."/>
            <person name="Bentley D.R."/>
            <person name="Beck S."/>
            <person name="Rogers J."/>
            <person name="Shimizu N."/>
            <person name="Minoshima S."/>
            <person name="Kawasaki K."/>
            <person name="Sasaki T."/>
            <person name="Asakawa S."/>
            <person name="Kudoh J."/>
            <person name="Shintani A."/>
            <person name="Shibuya K."/>
            <person name="Yoshizaki Y."/>
            <person name="Aoki N."/>
            <person name="Mitsuyama S."/>
            <person name="Roe B.A."/>
            <person name="Chen F."/>
            <person name="Chu L."/>
            <person name="Crabtree J."/>
            <person name="Deschamps S."/>
            <person name="Do A."/>
            <person name="Do T."/>
            <person name="Dorman A."/>
            <person name="Fang F."/>
            <person name="Fu Y."/>
            <person name="Hu P."/>
            <person name="Hua A."/>
            <person name="Kenton S."/>
            <person name="Lai H."/>
            <person name="Lao H.I."/>
            <person name="Lewis J."/>
            <person name="Lewis S."/>
            <person name="Lin S.-P."/>
            <person name="Loh P."/>
            <person name="Malaj E."/>
            <person name="Nguyen T."/>
            <person name="Pan H."/>
            <person name="Phan S."/>
            <person name="Qi S."/>
            <person name="Qian Y."/>
            <person name="Ray L."/>
            <person name="Ren Q."/>
            <person name="Shaull S."/>
            <person name="Sloan D."/>
            <person name="Song L."/>
            <person name="Wang Q."/>
            <person name="Wang Y."/>
            <person name="Wang Z."/>
            <person name="White J."/>
            <person name="Willingham D."/>
            <person name="Wu H."/>
            <person name="Yao Z."/>
            <person name="Zhan M."/>
            <person name="Zhang G."/>
            <person name="Chissoe S."/>
            <person name="Murray J."/>
            <person name="Miller N."/>
            <person name="Minx P."/>
            <person name="Fulton R."/>
            <person name="Johnson D."/>
            <person name="Bemis G."/>
            <person name="Bentley D."/>
            <person name="Bradshaw H."/>
            <person name="Bourne S."/>
            <person name="Cordes M."/>
            <person name="Du Z."/>
            <person name="Fulton L."/>
            <person name="Goela D."/>
            <person name="Graves T."/>
            <person name="Hawkins J."/>
            <person name="Hinds K."/>
            <person name="Kemp K."/>
            <person name="Latreille P."/>
            <person name="Layman D."/>
            <person name="Ozersky P."/>
            <person name="Rohlfing T."/>
            <person name="Scheet P."/>
            <person name="Walker C."/>
            <person name="Wamsley A."/>
            <person name="Wohldmann P."/>
            <person name="Pepin K."/>
            <person name="Nelson J."/>
            <person name="Korf I."/>
            <person name="Bedell J.A."/>
            <person name="Hillier L.W."/>
            <person name="Mardis E."/>
            <person name="Waterston R."/>
            <person name="Wilson R."/>
            <person name="Emanuel B.S."/>
            <person name="Shaikh T."/>
            <person name="Kurahashi H."/>
            <person name="Saitta S."/>
            <person name="Budarf M.L."/>
            <person name="McDermid H.E."/>
            <person name="Johnson A."/>
            <person name="Wong A.C.C."/>
            <person name="Morrow B.E."/>
            <person name="Edelmann L."/>
            <person name="Kim U.J."/>
            <person name="Shizuya H."/>
            <person name="Simon M.I."/>
            <person name="Dumanski J.P."/>
            <person name="Peyrard M."/>
            <person name="Kedra D."/>
            <person name="Seroussi E."/>
            <person name="Fransson I."/>
            <person name="Tapia I."/>
            <person name="Bruder C.E."/>
            <person name="O'Brien K.P."/>
            <person name="Wilkinson P."/>
            <person name="Bodenteich A."/>
            <person name="Hartman K."/>
            <person name="Hu X."/>
            <person name="Khan A.S."/>
            <person name="Lane L."/>
            <person name="Tilahun Y."/>
            <person name="Wright H."/>
        </authorList>
    </citation>
    <scope>NUCLEOTIDE SEQUENCE [LARGE SCALE GENOMIC DNA]</scope>
</reference>
<reference key="6">
    <citation type="journal article" date="2004" name="Genome Res.">
        <title>The status, quality, and expansion of the NIH full-length cDNA project: the Mammalian Gene Collection (MGC).</title>
        <authorList>
            <consortium name="The MGC Project Team"/>
        </authorList>
    </citation>
    <scope>NUCLEOTIDE SEQUENCE [LARGE SCALE MRNA]</scope>
    <source>
        <tissue>Brain</tissue>
    </source>
</reference>
<reference key="7">
    <citation type="journal article" date="1995" name="Neuron">
        <title>Identification and molecular localization of a pH-sensing domain for the inward rectifier potassium channel HIR.</title>
        <authorList>
            <person name="Coulter K.L."/>
            <person name="Perier F."/>
            <person name="Radeke C.M."/>
            <person name="Vandenberg C.A."/>
        </authorList>
    </citation>
    <scope>FUNCTION</scope>
    <scope>TRANSPORTER ACTIVITY</scope>
    <scope>MUTAGENESIS OF HIS-117</scope>
</reference>
<reference key="8">
    <citation type="journal article" date="2002" name="Proc. Natl. Acad. Sci. U.S.A.">
        <title>Heteromerization of Kir2.x potassium channels contributes to the phenotype of Andersen's syndrome.</title>
        <authorList>
            <person name="Preisig-Muller R."/>
            <person name="Schlichthorl G."/>
            <person name="Goerge T."/>
            <person name="Heinen S."/>
            <person name="Bruggemann A."/>
            <person name="Rajan S."/>
            <person name="Derst C."/>
            <person name="Veh R.W."/>
            <person name="Daut J."/>
        </authorList>
    </citation>
    <scope>INTERACTION WITH KCNJ2 AND KCNJ12</scope>
</reference>
<reference key="9">
    <citation type="journal article" date="2009" name="J. Mol. Biol.">
        <title>Molecular mechanism of inward rectifier potassium channel 2.3 regulation by tax-interacting protein-1.</title>
        <authorList>
            <person name="Yan X."/>
            <person name="Zhou H."/>
            <person name="Zhang J."/>
            <person name="Shi C."/>
            <person name="Xie X."/>
            <person name="Wu Y."/>
            <person name="Tian C."/>
            <person name="Shen Y."/>
            <person name="Long J."/>
        </authorList>
    </citation>
    <scope>X-RAY CRYSTALLOGRAPHY (2.8 ANGSTROMS) OF 436-445 IN COMPLEX WITH TAX1BP3</scope>
    <scope>INTERACTION WITH TAX1BP3</scope>
</reference>
<keyword id="KW-0002">3D-structure</keyword>
<keyword id="KW-1003">Cell membrane</keyword>
<keyword id="KW-0968">Cytoplasmic vesicle</keyword>
<keyword id="KW-0407">Ion channel</keyword>
<keyword id="KW-0406">Ion transport</keyword>
<keyword id="KW-0472">Membrane</keyword>
<keyword id="KW-0628">Postsynaptic cell membrane</keyword>
<keyword id="KW-0630">Potassium</keyword>
<keyword id="KW-0633">Potassium transport</keyword>
<keyword id="KW-1267">Proteomics identification</keyword>
<keyword id="KW-1185">Reference proteome</keyword>
<keyword id="KW-0770">Synapse</keyword>
<keyword id="KW-0812">Transmembrane</keyword>
<keyword id="KW-1133">Transmembrane helix</keyword>
<keyword id="KW-0813">Transport</keyword>
<keyword id="KW-0851">Voltage-gated channel</keyword>
<sequence>MHGHSRNGQAHVPRRKRRNRFVKKNGQCNVYFANLSNKSQRYMADIFTTCVDTRWRYMLMIFSAAFLVSWLFFGLLFWCIAFFHGDLEASPGVPAAGGPAAGGGGAAPVAPKPCIMHVNGFLGAFLFSVETQTTIGYGFRCVTEECPLAVIAVVVQSIVGCVIDSFMIGTIMAKMARPKKRAQTLLFSHHAVISVRDGKLCLMWRVGNLRKSHIVEAHVRAQLIKPYMTQEGEYLPLDQRDLNVGYDIGLDRIFLVSPIIIVHEIDEDSPLYGMGKEELESEDFEIVVILEGMVEATAMTTQARSSYLASEILWGHRFEPVVFEEKSHYKVDYSRFHKTYEVAGTPCCSARELQESKITVLPAPPPPPSAFCYENELALMSQEEEEMEEEAAAAAAVAAGLGLEAGSKEEAGIIRMLEFGSHLDLERMQASLPLDNISYRRESAI</sequence>
<proteinExistence type="evidence at protein level"/>
<gene>
    <name type="primary">KCNJ4</name>
    <name type="synonym">IRK3</name>
</gene>
<organism>
    <name type="scientific">Homo sapiens</name>
    <name type="common">Human</name>
    <dbReference type="NCBI Taxonomy" id="9606"/>
    <lineage>
        <taxon>Eukaryota</taxon>
        <taxon>Metazoa</taxon>
        <taxon>Chordata</taxon>
        <taxon>Craniata</taxon>
        <taxon>Vertebrata</taxon>
        <taxon>Euteleostomi</taxon>
        <taxon>Mammalia</taxon>
        <taxon>Eutheria</taxon>
        <taxon>Euarchontoglires</taxon>
        <taxon>Primates</taxon>
        <taxon>Haplorrhini</taxon>
        <taxon>Catarrhini</taxon>
        <taxon>Hominidae</taxon>
        <taxon>Homo</taxon>
    </lineage>
</organism>
<comment type="function">
    <text evidence="7 8 9 10">Inward rectifier potassium channels are characterized by a greater tendency to allow potassium to flow into the cell rather than out of it. Their voltage dependence is regulated by the concentration of extracellular potassium; as external potassium is raised, the voltage range of the channel opening shifts to more positive voltages. The inward rectification is mainly due to the blockage of outward current by internal magnesium. Can be blocked by extracellular barium and cesium.</text>
</comment>
<comment type="catalytic activity">
    <reaction evidence="7 8 9 10">
        <text>K(+)(in) = K(+)(out)</text>
        <dbReference type="Rhea" id="RHEA:29463"/>
        <dbReference type="ChEBI" id="CHEBI:29103"/>
    </reaction>
</comment>
<comment type="subunit">
    <text evidence="2 3 5 6">Homomultimeric and heteromultimeric association with KCNJ2 and KCNJ12 (PubMed:12032359). Interacts with DLG2 and DLG4 (By similarity). Associates, via its PDZ-recognition domain, with a complex containing LIN7A, LIN7B, LIN7C, DLG1, CASK and APBA1 (By similarity). Interacts with TAX1BP3. TAX1BP3 competes with LIN7 family members for KCNJ4 binding (PubMed:19635485).</text>
</comment>
<comment type="interaction">
    <interactant intactId="EBI-706117">
        <id>P48050</id>
    </interactant>
    <interactant intactId="EBI-357345">
        <id>Q14160</id>
        <label>SCRIB</label>
    </interactant>
    <organismsDiffer>false</organismsDiffer>
    <experiments>2</experiments>
</comment>
<comment type="subcellular location">
    <subcellularLocation>
        <location evidence="2">Cell membrane</location>
        <topology evidence="4">Multi-pass membrane protein</topology>
    </subcellularLocation>
    <subcellularLocation>
        <location evidence="2">Postsynaptic cell membrane</location>
        <topology evidence="4">Multi-pass membrane protein</topology>
    </subcellularLocation>
    <subcellularLocation>
        <location evidence="2">Cytoplasmic vesicle membrane</location>
    </subcellularLocation>
    <text evidence="2">TAX1BP3 binding promotes dissociation of KCNJ4 from LIN7 famaly members and KCNJ4 internalization.</text>
</comment>
<comment type="tissue specificity">
    <text>Heart, skeletal muscle, and several different brain regions including the hippocampus.</text>
</comment>
<comment type="domain">
    <text>The Val/Gly/Ala/Pro stretch may have a functional role in the conductance or permeation properties.</text>
</comment>
<comment type="similarity">
    <text evidence="11">Belongs to the inward rectifier-type potassium channel (TC 1.A.2.1) family. KCNJ4 subfamily.</text>
</comment>
<dbReference type="EMBL" id="U07364">
    <property type="protein sequence ID" value="AAA19962.1"/>
    <property type="molecule type" value="mRNA"/>
</dbReference>
<dbReference type="EMBL" id="U24056">
    <property type="protein sequence ID" value="AAA66076.1"/>
    <property type="molecule type" value="mRNA"/>
</dbReference>
<dbReference type="EMBL" id="S72503">
    <property type="protein sequence ID" value="AAC60632.1"/>
    <property type="molecule type" value="mRNA"/>
</dbReference>
<dbReference type="EMBL" id="CR456507">
    <property type="protein sequence ID" value="CAG30393.1"/>
    <property type="molecule type" value="mRNA"/>
</dbReference>
<dbReference type="EMBL" id="Z97056">
    <property type="status" value="NOT_ANNOTATED_CDS"/>
    <property type="molecule type" value="Genomic_DNA"/>
</dbReference>
<dbReference type="EMBL" id="BC113506">
    <property type="protein sequence ID" value="AAI13507.1"/>
    <property type="molecule type" value="mRNA"/>
</dbReference>
<dbReference type="EMBL" id="BC113508">
    <property type="protein sequence ID" value="AAI13509.1"/>
    <property type="molecule type" value="mRNA"/>
</dbReference>
<dbReference type="CCDS" id="CCDS13971.1"/>
<dbReference type="PIR" id="A54852">
    <property type="entry name" value="A54852"/>
</dbReference>
<dbReference type="PIR" id="I38521">
    <property type="entry name" value="I38521"/>
</dbReference>
<dbReference type="RefSeq" id="NP_004972.1">
    <property type="nucleotide sequence ID" value="NM_004981.2"/>
</dbReference>
<dbReference type="RefSeq" id="NP_690607.1">
    <property type="nucleotide sequence ID" value="NM_152868.3"/>
</dbReference>
<dbReference type="PDB" id="3GJ9">
    <property type="method" value="X-ray"/>
    <property type="resolution" value="2.80 A"/>
    <property type="chains" value="C/D=436-445"/>
</dbReference>
<dbReference type="PDBsum" id="3GJ9"/>
<dbReference type="SMR" id="P48050"/>
<dbReference type="BioGRID" id="109963">
    <property type="interactions" value="14"/>
</dbReference>
<dbReference type="ELM" id="P48050"/>
<dbReference type="FunCoup" id="P48050">
    <property type="interactions" value="322"/>
</dbReference>
<dbReference type="IntAct" id="P48050">
    <property type="interactions" value="6"/>
</dbReference>
<dbReference type="MINT" id="P48050"/>
<dbReference type="STRING" id="9606.ENSP00000306497"/>
<dbReference type="BindingDB" id="P48050"/>
<dbReference type="ChEMBL" id="CHEMBL2146347"/>
<dbReference type="DrugBank" id="DB01136">
    <property type="generic name" value="Carvedilol"/>
</dbReference>
<dbReference type="DrugBank" id="DB04855">
    <property type="generic name" value="Dronedarone"/>
</dbReference>
<dbReference type="DrugBank" id="DB01110">
    <property type="generic name" value="Miconazole"/>
</dbReference>
<dbReference type="DrugBank" id="DB00243">
    <property type="generic name" value="Ranolazine"/>
</dbReference>
<dbReference type="DrugCentral" id="P48050"/>
<dbReference type="GuidetoPHARMACOLOGY" id="432"/>
<dbReference type="TCDB" id="1.A.2.1.18">
    <property type="family name" value="the inward rectifier k(+) channel (irk-c) family"/>
</dbReference>
<dbReference type="iPTMnet" id="P48050"/>
<dbReference type="PhosphoSitePlus" id="P48050"/>
<dbReference type="BioMuta" id="KCNJ4"/>
<dbReference type="DMDM" id="1352483"/>
<dbReference type="MassIVE" id="P48050"/>
<dbReference type="PaxDb" id="9606-ENSP00000306497"/>
<dbReference type="PeptideAtlas" id="P48050"/>
<dbReference type="ProteomicsDB" id="55841"/>
<dbReference type="Antibodypedia" id="327">
    <property type="antibodies" value="288 antibodies from 29 providers"/>
</dbReference>
<dbReference type="DNASU" id="3761"/>
<dbReference type="Ensembl" id="ENST00000303592.3">
    <property type="protein sequence ID" value="ENSP00000306497.3"/>
    <property type="gene ID" value="ENSG00000168135.4"/>
</dbReference>
<dbReference type="GeneID" id="3761"/>
<dbReference type="KEGG" id="hsa:3761"/>
<dbReference type="MANE-Select" id="ENST00000303592.3">
    <property type="protein sequence ID" value="ENSP00000306497.3"/>
    <property type="RefSeq nucleotide sequence ID" value="NM_152868.3"/>
    <property type="RefSeq protein sequence ID" value="NP_690607.1"/>
</dbReference>
<dbReference type="UCSC" id="uc003avt.3">
    <property type="organism name" value="human"/>
</dbReference>
<dbReference type="AGR" id="HGNC:6265"/>
<dbReference type="CTD" id="3761"/>
<dbReference type="DisGeNET" id="3761"/>
<dbReference type="GeneCards" id="KCNJ4"/>
<dbReference type="HGNC" id="HGNC:6265">
    <property type="gene designation" value="KCNJ4"/>
</dbReference>
<dbReference type="HPA" id="ENSG00000168135">
    <property type="expression patterns" value="Group enriched (brain, heart muscle)"/>
</dbReference>
<dbReference type="MalaCards" id="KCNJ4"/>
<dbReference type="MIM" id="600504">
    <property type="type" value="gene"/>
</dbReference>
<dbReference type="neXtProt" id="NX_P48050"/>
<dbReference type="OpenTargets" id="ENSG00000168135"/>
<dbReference type="PharmGKB" id="PA30048"/>
<dbReference type="VEuPathDB" id="HostDB:ENSG00000168135"/>
<dbReference type="eggNOG" id="KOG3827">
    <property type="taxonomic scope" value="Eukaryota"/>
</dbReference>
<dbReference type="GeneTree" id="ENSGT01030000234586"/>
<dbReference type="HOGENOM" id="CLU_022738_11_1_1"/>
<dbReference type="InParanoid" id="P48050"/>
<dbReference type="OMA" id="GGIIQMM"/>
<dbReference type="OrthoDB" id="273257at2759"/>
<dbReference type="PAN-GO" id="P48050">
    <property type="GO annotations" value="4 GO annotations based on evolutionary models"/>
</dbReference>
<dbReference type="PhylomeDB" id="P48050"/>
<dbReference type="TreeFam" id="TF313676"/>
<dbReference type="PathwayCommons" id="P48050"/>
<dbReference type="Reactome" id="R-HSA-1296041">
    <property type="pathway name" value="Activation of G protein gated Potassium channels"/>
</dbReference>
<dbReference type="Reactome" id="R-HSA-1296053">
    <property type="pathway name" value="Classical Kir channels"/>
</dbReference>
<dbReference type="Reactome" id="R-HSA-5576886">
    <property type="pathway name" value="Phase 4 - resting membrane potential"/>
</dbReference>
<dbReference type="Reactome" id="R-HSA-997272">
    <property type="pathway name" value="Inhibition of voltage gated Ca2+ channels via Gbeta/gamma subunits"/>
</dbReference>
<dbReference type="SignaLink" id="P48050"/>
<dbReference type="SIGNOR" id="P48050"/>
<dbReference type="BioGRID-ORCS" id="3761">
    <property type="hits" value="49 hits in 1147 CRISPR screens"/>
</dbReference>
<dbReference type="ChiTaRS" id="KCNJ4">
    <property type="organism name" value="human"/>
</dbReference>
<dbReference type="EvolutionaryTrace" id="P48050"/>
<dbReference type="GeneWiki" id="KCNJ4"/>
<dbReference type="GenomeRNAi" id="3761"/>
<dbReference type="Pharos" id="P48050">
    <property type="development level" value="Tchem"/>
</dbReference>
<dbReference type="PRO" id="PR:P48050"/>
<dbReference type="Proteomes" id="UP000005640">
    <property type="component" value="Chromosome 22"/>
</dbReference>
<dbReference type="RNAct" id="P48050">
    <property type="molecule type" value="protein"/>
</dbReference>
<dbReference type="Bgee" id="ENSG00000168135">
    <property type="expression patterns" value="Expressed in endothelial cell and 88 other cell types or tissues"/>
</dbReference>
<dbReference type="ExpressionAtlas" id="P48050">
    <property type="expression patterns" value="baseline and differential"/>
</dbReference>
<dbReference type="GO" id="GO:0016323">
    <property type="term" value="C:basolateral plasma membrane"/>
    <property type="evidence" value="ECO:0000314"/>
    <property type="project" value="UniProtKB"/>
</dbReference>
<dbReference type="GO" id="GO:0030659">
    <property type="term" value="C:cytoplasmic vesicle membrane"/>
    <property type="evidence" value="ECO:0007669"/>
    <property type="project" value="UniProtKB-SubCell"/>
</dbReference>
<dbReference type="GO" id="GO:0005886">
    <property type="term" value="C:plasma membrane"/>
    <property type="evidence" value="ECO:0000318"/>
    <property type="project" value="GO_Central"/>
</dbReference>
<dbReference type="GO" id="GO:0045211">
    <property type="term" value="C:postsynaptic membrane"/>
    <property type="evidence" value="ECO:0007669"/>
    <property type="project" value="UniProtKB-SubCell"/>
</dbReference>
<dbReference type="GO" id="GO:0008076">
    <property type="term" value="C:voltage-gated potassium channel complex"/>
    <property type="evidence" value="ECO:0000304"/>
    <property type="project" value="ProtInc"/>
</dbReference>
<dbReference type="GO" id="GO:0005242">
    <property type="term" value="F:inward rectifier potassium channel activity"/>
    <property type="evidence" value="ECO:0000314"/>
    <property type="project" value="UniProtKB"/>
</dbReference>
<dbReference type="GO" id="GO:0030165">
    <property type="term" value="F:PDZ domain binding"/>
    <property type="evidence" value="ECO:0000353"/>
    <property type="project" value="UniProtKB"/>
</dbReference>
<dbReference type="GO" id="GO:1990573">
    <property type="term" value="P:potassium ion import across plasma membrane"/>
    <property type="evidence" value="ECO:0000318"/>
    <property type="project" value="GO_Central"/>
</dbReference>
<dbReference type="GO" id="GO:0006813">
    <property type="term" value="P:potassium ion transport"/>
    <property type="evidence" value="ECO:0000304"/>
    <property type="project" value="ProtInc"/>
</dbReference>
<dbReference type="GO" id="GO:0034765">
    <property type="term" value="P:regulation of monoatomic ion transmembrane transport"/>
    <property type="evidence" value="ECO:0000318"/>
    <property type="project" value="GO_Central"/>
</dbReference>
<dbReference type="FunFam" id="1.10.287.70:FF:000039">
    <property type="entry name" value="ATP-sensitive inward rectifier potassium channel 12"/>
    <property type="match status" value="1"/>
</dbReference>
<dbReference type="FunFam" id="2.60.40.1400:FF:000001">
    <property type="entry name" value="G protein-activated inward rectifier potassium channel 2"/>
    <property type="match status" value="1"/>
</dbReference>
<dbReference type="Gene3D" id="1.10.287.70">
    <property type="match status" value="1"/>
</dbReference>
<dbReference type="Gene3D" id="2.60.40.1400">
    <property type="entry name" value="G protein-activated inward rectifier potassium channel 1"/>
    <property type="match status" value="1"/>
</dbReference>
<dbReference type="InterPro" id="IPR014756">
    <property type="entry name" value="Ig_E-set"/>
</dbReference>
<dbReference type="InterPro" id="IPR041647">
    <property type="entry name" value="IRK_C"/>
</dbReference>
<dbReference type="InterPro" id="IPR016449">
    <property type="entry name" value="K_chnl_inward-rec_Kir"/>
</dbReference>
<dbReference type="InterPro" id="IPR003273">
    <property type="entry name" value="K_chnl_inward-rec_Kir2.3"/>
</dbReference>
<dbReference type="InterPro" id="IPR013518">
    <property type="entry name" value="K_chnl_inward-rec_Kir_cyto"/>
</dbReference>
<dbReference type="InterPro" id="IPR040445">
    <property type="entry name" value="Kir_TM"/>
</dbReference>
<dbReference type="PANTHER" id="PTHR11767">
    <property type="entry name" value="INWARD RECTIFIER POTASSIUM CHANNEL"/>
    <property type="match status" value="1"/>
</dbReference>
<dbReference type="PANTHER" id="PTHR11767:SF53">
    <property type="entry name" value="INWARD RECTIFIER POTASSIUM CHANNEL 4"/>
    <property type="match status" value="1"/>
</dbReference>
<dbReference type="Pfam" id="PF01007">
    <property type="entry name" value="IRK"/>
    <property type="match status" value="1"/>
</dbReference>
<dbReference type="Pfam" id="PF17655">
    <property type="entry name" value="IRK_C"/>
    <property type="match status" value="1"/>
</dbReference>
<dbReference type="PIRSF" id="PIRSF005465">
    <property type="entry name" value="GIRK_kir"/>
    <property type="match status" value="1"/>
</dbReference>
<dbReference type="PRINTS" id="PR01326">
    <property type="entry name" value="KIR23CHANNEL"/>
</dbReference>
<dbReference type="PRINTS" id="PR01320">
    <property type="entry name" value="KIRCHANNEL"/>
</dbReference>
<dbReference type="SUPFAM" id="SSF81296">
    <property type="entry name" value="E set domains"/>
    <property type="match status" value="1"/>
</dbReference>
<dbReference type="SUPFAM" id="SSF81324">
    <property type="entry name" value="Voltage-gated potassium channels"/>
    <property type="match status" value="1"/>
</dbReference>
<name>KCNJ4_HUMAN</name>
<evidence type="ECO:0000250" key="1"/>
<evidence type="ECO:0000250" key="2">
    <source>
        <dbReference type="UniProtKB" id="P52189"/>
    </source>
</evidence>
<evidence type="ECO:0000250" key="3">
    <source>
        <dbReference type="UniProtKB" id="P52190"/>
    </source>
</evidence>
<evidence type="ECO:0000255" key="4"/>
<evidence type="ECO:0000269" key="5">
    <source>
    </source>
</evidence>
<evidence type="ECO:0000269" key="6">
    <source>
    </source>
</evidence>
<evidence type="ECO:0000269" key="7">
    <source>
    </source>
</evidence>
<evidence type="ECO:0000269" key="8">
    <source>
    </source>
</evidence>
<evidence type="ECO:0000269" key="9">
    <source>
    </source>
</evidence>
<evidence type="ECO:0000269" key="10">
    <source>
    </source>
</evidence>
<evidence type="ECO:0000305" key="11"/>
<protein>
    <recommendedName>
        <fullName>Inward rectifier potassium channel 4</fullName>
    </recommendedName>
    <alternativeName>
        <fullName>HIRK2</fullName>
    </alternativeName>
    <alternativeName>
        <fullName>HRK1</fullName>
    </alternativeName>
    <alternativeName>
        <fullName>Hippocampal inward rectifier</fullName>
        <shortName>HIR</shortName>
    </alternativeName>
    <alternativeName>
        <fullName>Inward rectifier K(+) channel Kir2.3</fullName>
        <shortName>IRK-3</shortName>
    </alternativeName>
    <alternativeName>
        <fullName>Potassium channel, inwardly rectifying subfamily J member 4</fullName>
    </alternativeName>
</protein>
<feature type="chain" id="PRO_0000154930" description="Inward rectifier potassium channel 4">
    <location>
        <begin position="1"/>
        <end position="445"/>
    </location>
</feature>
<feature type="topological domain" description="Cytoplasmic" evidence="1">
    <location>
        <begin position="1"/>
        <end position="55"/>
    </location>
</feature>
<feature type="transmembrane region" description="Helical; Name=M1" evidence="1">
    <location>
        <begin position="56"/>
        <end position="80"/>
    </location>
</feature>
<feature type="topological domain" description="Extracellular" evidence="1">
    <location>
        <begin position="81"/>
        <end position="120"/>
    </location>
</feature>
<feature type="intramembrane region" description="Helical; Pore-forming; Name=H5" evidence="1">
    <location>
        <begin position="121"/>
        <end position="132"/>
    </location>
</feature>
<feature type="intramembrane region" description="Pore-forming" evidence="1">
    <location>
        <begin position="133"/>
        <end position="139"/>
    </location>
</feature>
<feature type="topological domain" description="Extracellular" evidence="1">
    <location>
        <begin position="140"/>
        <end position="148"/>
    </location>
</feature>
<feature type="transmembrane region" description="Helical; Name=M2" evidence="1">
    <location>
        <begin position="149"/>
        <end position="170"/>
    </location>
</feature>
<feature type="topological domain" description="Cytoplasmic" evidence="1">
    <location>
        <begin position="171"/>
        <end position="445"/>
    </location>
</feature>
<feature type="region of interest" description="Val/Gly/Ala/Pro stretch">
    <location>
        <begin position="91"/>
        <end position="111"/>
    </location>
</feature>
<feature type="short sequence motif" description="Selectivity filter" evidence="1">
    <location>
        <begin position="134"/>
        <end position="139"/>
    </location>
</feature>
<feature type="short sequence motif" description="PDZ-binding" evidence="4">
    <location>
        <begin position="443"/>
        <end position="445"/>
    </location>
</feature>
<feature type="site" description="Role in the control of polyamine-mediated channel gating and in the blocking by intracellular magnesium" evidence="1">
    <location>
        <position position="164"/>
    </location>
</feature>
<feature type="mutagenesis site" description="Abolishes inwardly rectifying potassium currents and pH-sensitivity." evidence="7">
    <original>H</original>
    <variation>E</variation>
    <location>
        <position position="117"/>
    </location>
</feature>
<feature type="sequence conflict" description="In Ref. 3; AAC60632." evidence="11" ref="3">
    <original>KR</original>
    <variation>NG</variation>
    <location>
        <begin position="16"/>
        <end position="17"/>
    </location>
</feature>
<feature type="sequence conflict" description="In Ref. 2; AAA66076." evidence="11" ref="2">
    <original>A</original>
    <variation>D</variation>
    <location>
        <position position="107"/>
    </location>
</feature>
<feature type="sequence conflict" description="In Ref. 3; AAC60632." evidence="11" ref="3">
    <original>A</original>
    <variation>G</variation>
    <location>
        <position position="350"/>
    </location>
</feature>
<feature type="sequence conflict" description="In Ref. 2; AAA66076." evidence="11" ref="2">
    <original>A</original>
    <variation>S</variation>
    <location>
        <position position="392"/>
    </location>
</feature>
<feature type="sequence conflict" description="In Ref. 2; AAA66076." evidence="11" ref="2">
    <original>A</original>
    <variation>S</variation>
    <location>
        <position position="395"/>
    </location>
</feature>
<feature type="sequence conflict" description="In Ref. 3." evidence="11" ref="3">
    <original>A</original>
    <variation>R</variation>
    <location>
        <position position="396"/>
    </location>
</feature>
<feature type="sequence conflict" description="In Ref. 3." evidence="11" ref="3">
    <original>A</original>
    <variation>G</variation>
    <location>
        <position position="398"/>
    </location>
</feature>